<name>IXTPA_THEMA</name>
<keyword id="KW-0002">3D-structure</keyword>
<keyword id="KW-0378">Hydrolase</keyword>
<keyword id="KW-0460">Magnesium</keyword>
<keyword id="KW-0479">Metal-binding</keyword>
<keyword id="KW-0546">Nucleotide metabolism</keyword>
<keyword id="KW-0547">Nucleotide-binding</keyword>
<keyword id="KW-1185">Reference proteome</keyword>
<gene>
    <name type="ordered locus">TM_0159</name>
</gene>
<feature type="chain" id="PRO_0000178252" description="dITP/XTP pyrophosphatase">
    <location>
        <begin position="1"/>
        <end position="196"/>
    </location>
</feature>
<feature type="active site" description="Proton acceptor" evidence="1">
    <location>
        <position position="68"/>
    </location>
</feature>
<feature type="binding site" evidence="1">
    <location>
        <begin position="10"/>
        <end position="15"/>
    </location>
    <ligand>
        <name>substrate</name>
    </ligand>
</feature>
<feature type="binding site" evidence="1">
    <location>
        <position position="68"/>
    </location>
    <ligand>
        <name>Mg(2+)</name>
        <dbReference type="ChEBI" id="CHEBI:18420"/>
    </ligand>
</feature>
<feature type="binding site" evidence="1">
    <location>
        <position position="69"/>
    </location>
    <ligand>
        <name>substrate</name>
    </ligand>
</feature>
<feature type="binding site" evidence="1">
    <location>
        <begin position="148"/>
        <end position="151"/>
    </location>
    <ligand>
        <name>substrate</name>
    </ligand>
</feature>
<feature type="binding site" evidence="1">
    <location>
        <begin position="175"/>
        <end position="176"/>
    </location>
    <ligand>
        <name>substrate</name>
    </ligand>
</feature>
<feature type="strand" evidence="2">
    <location>
        <begin position="4"/>
        <end position="9"/>
    </location>
</feature>
<feature type="helix" evidence="2">
    <location>
        <begin position="13"/>
        <end position="20"/>
    </location>
</feature>
<feature type="strand" evidence="2">
    <location>
        <begin position="27"/>
        <end position="31"/>
    </location>
</feature>
<feature type="helix" evidence="2">
    <location>
        <begin position="45"/>
        <end position="60"/>
    </location>
</feature>
<feature type="strand" evidence="2">
    <location>
        <begin position="64"/>
        <end position="73"/>
    </location>
</feature>
<feature type="helix" evidence="2">
    <location>
        <begin position="74"/>
        <end position="76"/>
    </location>
</feature>
<feature type="helix" evidence="2">
    <location>
        <begin position="81"/>
        <end position="83"/>
    </location>
</feature>
<feature type="turn" evidence="2">
    <location>
        <begin position="84"/>
        <end position="90"/>
    </location>
</feature>
<feature type="helix" evidence="2">
    <location>
        <begin position="93"/>
        <end position="103"/>
    </location>
</feature>
<feature type="turn" evidence="2">
    <location>
        <begin position="104"/>
        <end position="106"/>
    </location>
</feature>
<feature type="strand" evidence="2">
    <location>
        <begin position="110"/>
        <end position="121"/>
    </location>
</feature>
<feature type="turn" evidence="2">
    <location>
        <begin position="122"/>
        <end position="125"/>
    </location>
</feature>
<feature type="strand" evidence="2">
    <location>
        <begin position="126"/>
        <end position="138"/>
    </location>
</feature>
<feature type="helix" evidence="2">
    <location>
        <begin position="151"/>
        <end position="153"/>
    </location>
</feature>
<feature type="strand" evidence="2">
    <location>
        <begin position="154"/>
        <end position="156"/>
    </location>
</feature>
<feature type="turn" evidence="2">
    <location>
        <begin position="163"/>
        <end position="165"/>
    </location>
</feature>
<feature type="helix" evidence="2">
    <location>
        <begin position="167"/>
        <end position="169"/>
    </location>
</feature>
<feature type="helix" evidence="2">
    <location>
        <begin position="170"/>
        <end position="173"/>
    </location>
</feature>
<feature type="helix" evidence="2">
    <location>
        <begin position="175"/>
        <end position="190"/>
    </location>
</feature>
<accession>Q9WY06</accession>
<proteinExistence type="evidence at protein level"/>
<evidence type="ECO:0000255" key="1">
    <source>
        <dbReference type="HAMAP-Rule" id="MF_01405"/>
    </source>
</evidence>
<evidence type="ECO:0007829" key="2">
    <source>
        <dbReference type="PDB" id="1VP2"/>
    </source>
</evidence>
<sequence>MKKLTVYLATTNPHKVEEIKMIAPEWMEILPSPEKIEVVEDGETFLENSVKKAVVYGKKLKHPVMADDSGLVIYSLGGFPGVMSARFMEEHSYKEKMRTILKMLEGKDRRAAFVCSATFFDPVENTLISVEDRVEGRIANEIRGTGGFGYDPFFIPDGYDKTFGEIPHLKEKISHRSKAFRKLFSVLEKILESENR</sequence>
<comment type="function">
    <text evidence="1">Pyrophosphatase that catalyzes the hydrolysis of nucleoside triphosphates to their monophosphate derivatives, with a high preference for the non-canonical purine nucleotides XTP (xanthosine triphosphate), dITP (deoxyinosine triphosphate) and ITP. Seems to function as a house-cleaning enzyme that removes non-canonical purine nucleotides from the nucleotide pool, thus preventing their incorporation into DNA/RNA and avoiding chromosomal lesions.</text>
</comment>
<comment type="catalytic activity">
    <reaction evidence="1">
        <text>XTP + H2O = XMP + diphosphate + H(+)</text>
        <dbReference type="Rhea" id="RHEA:28610"/>
        <dbReference type="ChEBI" id="CHEBI:15377"/>
        <dbReference type="ChEBI" id="CHEBI:15378"/>
        <dbReference type="ChEBI" id="CHEBI:33019"/>
        <dbReference type="ChEBI" id="CHEBI:57464"/>
        <dbReference type="ChEBI" id="CHEBI:61314"/>
        <dbReference type="EC" id="3.6.1.66"/>
    </reaction>
</comment>
<comment type="catalytic activity">
    <reaction evidence="1">
        <text>dITP + H2O = dIMP + diphosphate + H(+)</text>
        <dbReference type="Rhea" id="RHEA:28342"/>
        <dbReference type="ChEBI" id="CHEBI:15377"/>
        <dbReference type="ChEBI" id="CHEBI:15378"/>
        <dbReference type="ChEBI" id="CHEBI:33019"/>
        <dbReference type="ChEBI" id="CHEBI:61194"/>
        <dbReference type="ChEBI" id="CHEBI:61382"/>
        <dbReference type="EC" id="3.6.1.66"/>
    </reaction>
</comment>
<comment type="catalytic activity">
    <reaction evidence="1">
        <text>ITP + H2O = IMP + diphosphate + H(+)</text>
        <dbReference type="Rhea" id="RHEA:29399"/>
        <dbReference type="ChEBI" id="CHEBI:15377"/>
        <dbReference type="ChEBI" id="CHEBI:15378"/>
        <dbReference type="ChEBI" id="CHEBI:33019"/>
        <dbReference type="ChEBI" id="CHEBI:58053"/>
        <dbReference type="ChEBI" id="CHEBI:61402"/>
        <dbReference type="EC" id="3.6.1.66"/>
    </reaction>
</comment>
<comment type="cofactor">
    <cofactor evidence="1">
        <name>Mg(2+)</name>
        <dbReference type="ChEBI" id="CHEBI:18420"/>
    </cofactor>
    <text evidence="1">Binds 1 Mg(2+) ion per subunit.</text>
</comment>
<comment type="subunit">
    <text evidence="1">Homodimer.</text>
</comment>
<comment type="similarity">
    <text evidence="1">Belongs to the HAM1 NTPase family.</text>
</comment>
<organism>
    <name type="scientific">Thermotoga maritima (strain ATCC 43589 / DSM 3109 / JCM 10099 / NBRC 100826 / MSB8)</name>
    <dbReference type="NCBI Taxonomy" id="243274"/>
    <lineage>
        <taxon>Bacteria</taxon>
        <taxon>Thermotogati</taxon>
        <taxon>Thermotogota</taxon>
        <taxon>Thermotogae</taxon>
        <taxon>Thermotogales</taxon>
        <taxon>Thermotogaceae</taxon>
        <taxon>Thermotoga</taxon>
    </lineage>
</organism>
<reference key="1">
    <citation type="journal article" date="1999" name="Nature">
        <title>Evidence for lateral gene transfer between Archaea and Bacteria from genome sequence of Thermotoga maritima.</title>
        <authorList>
            <person name="Nelson K.E."/>
            <person name="Clayton R.A."/>
            <person name="Gill S.R."/>
            <person name="Gwinn M.L."/>
            <person name="Dodson R.J."/>
            <person name="Haft D.H."/>
            <person name="Hickey E.K."/>
            <person name="Peterson J.D."/>
            <person name="Nelson W.C."/>
            <person name="Ketchum K.A."/>
            <person name="McDonald L.A."/>
            <person name="Utterback T.R."/>
            <person name="Malek J.A."/>
            <person name="Linher K.D."/>
            <person name="Garrett M.M."/>
            <person name="Stewart A.M."/>
            <person name="Cotton M.D."/>
            <person name="Pratt M.S."/>
            <person name="Phillips C.A."/>
            <person name="Richardson D.L."/>
            <person name="Heidelberg J.F."/>
            <person name="Sutton G.G."/>
            <person name="Fleischmann R.D."/>
            <person name="Eisen J.A."/>
            <person name="White O."/>
            <person name="Salzberg S.L."/>
            <person name="Smith H.O."/>
            <person name="Venter J.C."/>
            <person name="Fraser C.M."/>
        </authorList>
    </citation>
    <scope>NUCLEOTIDE SEQUENCE [LARGE SCALE GENOMIC DNA]</scope>
    <source>
        <strain>ATCC 43589 / DSM 3109 / JCM 10099 / NBRC 100826 / MSB8</strain>
    </source>
</reference>
<dbReference type="EC" id="3.6.1.66" evidence="1"/>
<dbReference type="EMBL" id="AE000512">
    <property type="protein sequence ID" value="AAD35252.1"/>
    <property type="molecule type" value="Genomic_DNA"/>
</dbReference>
<dbReference type="PIR" id="E72410">
    <property type="entry name" value="E72410"/>
</dbReference>
<dbReference type="RefSeq" id="NP_227974.1">
    <property type="nucleotide sequence ID" value="NC_000853.1"/>
</dbReference>
<dbReference type="PDB" id="1VP2">
    <property type="method" value="X-ray"/>
    <property type="resolution" value="1.78 A"/>
    <property type="chains" value="A/B=1-196"/>
</dbReference>
<dbReference type="PDB" id="3S86">
    <property type="method" value="X-ray"/>
    <property type="resolution" value="2.15 A"/>
    <property type="chains" value="A/B/C/D=1-196"/>
</dbReference>
<dbReference type="PDBsum" id="1VP2"/>
<dbReference type="PDBsum" id="3S86"/>
<dbReference type="SMR" id="Q9WY06"/>
<dbReference type="FunCoup" id="Q9WY06">
    <property type="interactions" value="326"/>
</dbReference>
<dbReference type="STRING" id="243274.TM_0159"/>
<dbReference type="PaxDb" id="243274-THEMA_04005"/>
<dbReference type="EnsemblBacteria" id="AAD35252">
    <property type="protein sequence ID" value="AAD35252"/>
    <property type="gene ID" value="TM_0159"/>
</dbReference>
<dbReference type="KEGG" id="tma:TM0159"/>
<dbReference type="KEGG" id="tmi:THEMA_04005"/>
<dbReference type="KEGG" id="tmm:Tmari_0157"/>
<dbReference type="KEGG" id="tmw:THMA_0155"/>
<dbReference type="eggNOG" id="COG0127">
    <property type="taxonomic scope" value="Bacteria"/>
</dbReference>
<dbReference type="InParanoid" id="Q9WY06"/>
<dbReference type="OrthoDB" id="9807456at2"/>
<dbReference type="BRENDA" id="3.6.1.66">
    <property type="organism ID" value="6331"/>
</dbReference>
<dbReference type="EvolutionaryTrace" id="Q9WY06"/>
<dbReference type="Proteomes" id="UP000008183">
    <property type="component" value="Chromosome"/>
</dbReference>
<dbReference type="GO" id="GO:0005737">
    <property type="term" value="C:cytoplasm"/>
    <property type="evidence" value="ECO:0000318"/>
    <property type="project" value="GO_Central"/>
</dbReference>
<dbReference type="GO" id="GO:0005829">
    <property type="term" value="C:cytosol"/>
    <property type="evidence" value="ECO:0000318"/>
    <property type="project" value="GO_Central"/>
</dbReference>
<dbReference type="GO" id="GO:0035870">
    <property type="term" value="F:dITP diphosphatase activity"/>
    <property type="evidence" value="ECO:0007669"/>
    <property type="project" value="RHEA"/>
</dbReference>
<dbReference type="GO" id="GO:0036220">
    <property type="term" value="F:ITP diphosphatase activity"/>
    <property type="evidence" value="ECO:0007669"/>
    <property type="project" value="UniProtKB-EC"/>
</dbReference>
<dbReference type="GO" id="GO:0046872">
    <property type="term" value="F:metal ion binding"/>
    <property type="evidence" value="ECO:0007669"/>
    <property type="project" value="UniProtKB-KW"/>
</dbReference>
<dbReference type="GO" id="GO:0047429">
    <property type="term" value="F:nucleoside triphosphate diphosphatase activity"/>
    <property type="evidence" value="ECO:0000318"/>
    <property type="project" value="GO_Central"/>
</dbReference>
<dbReference type="GO" id="GO:0000166">
    <property type="term" value="F:nucleotide binding"/>
    <property type="evidence" value="ECO:0007669"/>
    <property type="project" value="UniProtKB-KW"/>
</dbReference>
<dbReference type="GO" id="GO:0017111">
    <property type="term" value="F:ribonucleoside triphosphate phosphatase activity"/>
    <property type="evidence" value="ECO:0007669"/>
    <property type="project" value="InterPro"/>
</dbReference>
<dbReference type="GO" id="GO:0036222">
    <property type="term" value="F:XTP diphosphatase activity"/>
    <property type="evidence" value="ECO:0007669"/>
    <property type="project" value="RHEA"/>
</dbReference>
<dbReference type="GO" id="GO:0009143">
    <property type="term" value="P:nucleoside triphosphate catabolic process"/>
    <property type="evidence" value="ECO:0000318"/>
    <property type="project" value="GO_Central"/>
</dbReference>
<dbReference type="GO" id="GO:0009117">
    <property type="term" value="P:nucleotide metabolic process"/>
    <property type="evidence" value="ECO:0007669"/>
    <property type="project" value="UniProtKB-KW"/>
</dbReference>
<dbReference type="GO" id="GO:0009146">
    <property type="term" value="P:purine nucleoside triphosphate catabolic process"/>
    <property type="evidence" value="ECO:0007669"/>
    <property type="project" value="UniProtKB-UniRule"/>
</dbReference>
<dbReference type="CDD" id="cd00515">
    <property type="entry name" value="HAM1"/>
    <property type="match status" value="1"/>
</dbReference>
<dbReference type="FunFam" id="3.90.950.10:FF:000001">
    <property type="entry name" value="dITP/XTP pyrophosphatase"/>
    <property type="match status" value="1"/>
</dbReference>
<dbReference type="Gene3D" id="3.90.950.10">
    <property type="match status" value="1"/>
</dbReference>
<dbReference type="HAMAP" id="MF_01405">
    <property type="entry name" value="Non_canon_purine_NTPase"/>
    <property type="match status" value="1"/>
</dbReference>
<dbReference type="InterPro" id="IPR020922">
    <property type="entry name" value="dITP/XTP_pyrophosphatase"/>
</dbReference>
<dbReference type="InterPro" id="IPR029001">
    <property type="entry name" value="ITPase-like_fam"/>
</dbReference>
<dbReference type="InterPro" id="IPR002637">
    <property type="entry name" value="RdgB/HAM1"/>
</dbReference>
<dbReference type="NCBIfam" id="TIGR00042">
    <property type="entry name" value="RdgB/HAM1 family non-canonical purine NTP pyrophosphatase"/>
    <property type="match status" value="1"/>
</dbReference>
<dbReference type="PANTHER" id="PTHR11067:SF9">
    <property type="entry name" value="INOSINE TRIPHOSPHATE PYROPHOSPHATASE"/>
    <property type="match status" value="1"/>
</dbReference>
<dbReference type="PANTHER" id="PTHR11067">
    <property type="entry name" value="INOSINE TRIPHOSPHATE PYROPHOSPHATASE/HAM1 PROTEIN"/>
    <property type="match status" value="1"/>
</dbReference>
<dbReference type="Pfam" id="PF01725">
    <property type="entry name" value="Ham1p_like"/>
    <property type="match status" value="1"/>
</dbReference>
<dbReference type="SUPFAM" id="SSF52972">
    <property type="entry name" value="ITPase-like"/>
    <property type="match status" value="1"/>
</dbReference>
<protein>
    <recommendedName>
        <fullName evidence="1">dITP/XTP pyrophosphatase</fullName>
        <ecNumber evidence="1">3.6.1.66</ecNumber>
    </recommendedName>
    <alternativeName>
        <fullName evidence="1">Non-canonical purine NTP pyrophosphatase</fullName>
    </alternativeName>
    <alternativeName>
        <fullName evidence="1">Non-standard purine NTP pyrophosphatase</fullName>
    </alternativeName>
    <alternativeName>
        <fullName evidence="1">Nucleoside-triphosphate diphosphatase</fullName>
    </alternativeName>
    <alternativeName>
        <fullName evidence="1">Nucleoside-triphosphate pyrophosphatase</fullName>
        <shortName evidence="1">NTPase</shortName>
    </alternativeName>
</protein>